<evidence type="ECO:0000256" key="1">
    <source>
        <dbReference type="SAM" id="MobiDB-lite"/>
    </source>
</evidence>
<evidence type="ECO:0000269" key="2">
    <source>
    </source>
</evidence>
<evidence type="ECO:0000269" key="3">
    <source>
    </source>
</evidence>
<evidence type="ECO:0000269" key="4">
    <source>
    </source>
</evidence>
<evidence type="ECO:0000303" key="5">
    <source>
    </source>
</evidence>
<evidence type="ECO:0000303" key="6">
    <source>
    </source>
</evidence>
<evidence type="ECO:0000305" key="7"/>
<evidence type="ECO:0000305" key="8">
    <source>
    </source>
</evidence>
<evidence type="ECO:0000312" key="9">
    <source>
        <dbReference type="HGNC" id="HGNC:30103"/>
    </source>
</evidence>
<evidence type="ECO:0007744" key="10">
    <source>
    </source>
</evidence>
<evidence type="ECO:0007744" key="11">
    <source>
    </source>
</evidence>
<accession>Q14CZ0</accession>
<organism>
    <name type="scientific">Homo sapiens</name>
    <name type="common">Human</name>
    <dbReference type="NCBI Taxonomy" id="9606"/>
    <lineage>
        <taxon>Eukaryota</taxon>
        <taxon>Metazoa</taxon>
        <taxon>Chordata</taxon>
        <taxon>Craniata</taxon>
        <taxon>Vertebrata</taxon>
        <taxon>Euteleostomi</taxon>
        <taxon>Mammalia</taxon>
        <taxon>Eutheria</taxon>
        <taxon>Euarchontoglires</taxon>
        <taxon>Primates</taxon>
        <taxon>Haplorrhini</taxon>
        <taxon>Catarrhini</taxon>
        <taxon>Hominidae</taxon>
        <taxon>Homo</taxon>
    </lineage>
</organism>
<sequence length="275" mass="30926">MEERKEEGEAEIQEHGPEHWFSKWERQCLAEAEQDEQLPPELQEEAAAAAQPEHKQQKLWHLFQNSATAVAQLYKDRVCQQPGLSLWVPFQNAATAVTNLYKESVDTHQRSFDIGIQIGYQRRNKDVLAWVKKRRRTIRREDLISFLCGKVPPPRNSRAPPRLTVVSPNRATSTETSSSVETDLQPFREAIALHGLSGAMASISVRSSTPGSPTHVSSGSNASRRRNGLHDVDLNTFISEEMALHLDNGGTRKRTSAQCGDVITDSPTHKRNRMI</sequence>
<dbReference type="EMBL" id="AC087190">
    <property type="status" value="NOT_ANNOTATED_CDS"/>
    <property type="molecule type" value="Genomic_DNA"/>
</dbReference>
<dbReference type="EMBL" id="BC113570">
    <property type="protein sequence ID" value="AAI13571.1"/>
    <property type="molecule type" value="mRNA"/>
</dbReference>
<dbReference type="CCDS" id="CCDS10538.1">
    <molecule id="Q14CZ0-1"/>
</dbReference>
<dbReference type="RefSeq" id="NP_054836.2">
    <molecule id="Q14CZ0-1"/>
    <property type="nucleotide sequence ID" value="NM_014117.2"/>
</dbReference>
<dbReference type="BioGRID" id="118829">
    <property type="interactions" value="829"/>
</dbReference>
<dbReference type="FunCoup" id="Q14CZ0">
    <property type="interactions" value="4981"/>
</dbReference>
<dbReference type="IntAct" id="Q14CZ0">
    <property type="interactions" value="3"/>
</dbReference>
<dbReference type="STRING" id="9606.ENSP00000331720"/>
<dbReference type="iPTMnet" id="Q14CZ0"/>
<dbReference type="PhosphoSitePlus" id="Q14CZ0"/>
<dbReference type="BioMuta" id="C16orf72"/>
<dbReference type="DMDM" id="121940554"/>
<dbReference type="jPOST" id="Q14CZ0"/>
<dbReference type="MassIVE" id="Q14CZ0"/>
<dbReference type="PaxDb" id="9606-ENSP00000331720"/>
<dbReference type="PeptideAtlas" id="Q14CZ0"/>
<dbReference type="ProteomicsDB" id="60337"/>
<dbReference type="Pumba" id="Q14CZ0"/>
<dbReference type="Antibodypedia" id="52099">
    <property type="antibodies" value="145 antibodies from 16 providers"/>
</dbReference>
<dbReference type="DNASU" id="29035"/>
<dbReference type="Ensembl" id="ENST00000327827.12">
    <molecule id="Q14CZ0-1"/>
    <property type="protein sequence ID" value="ENSP00000331720.7"/>
    <property type="gene ID" value="ENSG00000182831.12"/>
</dbReference>
<dbReference type="GeneID" id="29035"/>
<dbReference type="KEGG" id="hsa:29035"/>
<dbReference type="MANE-Select" id="ENST00000327827.12">
    <property type="protein sequence ID" value="ENSP00000331720.7"/>
    <property type="RefSeq nucleotide sequence ID" value="NM_014117.3"/>
    <property type="RefSeq protein sequence ID" value="NP_054836.2"/>
</dbReference>
<dbReference type="UCSC" id="uc002czm.4">
    <molecule id="Q14CZ0-1"/>
    <property type="organism name" value="human"/>
</dbReference>
<dbReference type="AGR" id="HGNC:30103"/>
<dbReference type="CTD" id="29035"/>
<dbReference type="DisGeNET" id="29035"/>
<dbReference type="GeneCards" id="HAPSTR1"/>
<dbReference type="HGNC" id="HGNC:30103">
    <property type="gene designation" value="HAPSTR1"/>
</dbReference>
<dbReference type="HPA" id="ENSG00000182831">
    <property type="expression patterns" value="Tissue enhanced (bone)"/>
</dbReference>
<dbReference type="neXtProt" id="NX_Q14CZ0"/>
<dbReference type="OpenTargets" id="ENSG00000182831"/>
<dbReference type="PharmGKB" id="PA145149589"/>
<dbReference type="VEuPathDB" id="HostDB:ENSG00000182831"/>
<dbReference type="eggNOG" id="ENOG502QPPE">
    <property type="taxonomic scope" value="Eukaryota"/>
</dbReference>
<dbReference type="GeneTree" id="ENSGT00390000002886"/>
<dbReference type="HOGENOM" id="CLU_081329_0_0_1"/>
<dbReference type="InParanoid" id="Q14CZ0"/>
<dbReference type="OMA" id="NSFEEEC"/>
<dbReference type="OrthoDB" id="12362at9604"/>
<dbReference type="PAN-GO" id="Q14CZ0">
    <property type="GO annotations" value="0 GO annotations based on evolutionary models"/>
</dbReference>
<dbReference type="PhylomeDB" id="Q14CZ0"/>
<dbReference type="TreeFam" id="TF323292"/>
<dbReference type="PathwayCommons" id="Q14CZ0"/>
<dbReference type="SignaLink" id="Q14CZ0"/>
<dbReference type="BioGRID-ORCS" id="29035">
    <property type="hits" value="281 hits in 1137 CRISPR screens"/>
</dbReference>
<dbReference type="ChiTaRS" id="C16orf72">
    <property type="organism name" value="human"/>
</dbReference>
<dbReference type="GenomeRNAi" id="29035"/>
<dbReference type="Pharos" id="Q14CZ0">
    <property type="development level" value="Tdark"/>
</dbReference>
<dbReference type="PRO" id="PR:Q14CZ0"/>
<dbReference type="Proteomes" id="UP000005640">
    <property type="component" value="Chromosome 16"/>
</dbReference>
<dbReference type="RNAct" id="Q14CZ0">
    <property type="molecule type" value="protein"/>
</dbReference>
<dbReference type="Bgee" id="ENSG00000182831">
    <property type="expression patterns" value="Expressed in secondary oocyte and 190 other cell types or tissues"/>
</dbReference>
<dbReference type="ExpressionAtlas" id="Q14CZ0">
    <property type="expression patterns" value="baseline and differential"/>
</dbReference>
<dbReference type="GO" id="GO:0005737">
    <property type="term" value="C:cytoplasm"/>
    <property type="evidence" value="ECO:0000314"/>
    <property type="project" value="UniProtKB"/>
</dbReference>
<dbReference type="GO" id="GO:0005634">
    <property type="term" value="C:nucleus"/>
    <property type="evidence" value="ECO:0000314"/>
    <property type="project" value="UniProtKB"/>
</dbReference>
<dbReference type="GO" id="GO:0031625">
    <property type="term" value="F:ubiquitin protein ligase binding"/>
    <property type="evidence" value="ECO:0000353"/>
    <property type="project" value="UniProtKB"/>
</dbReference>
<dbReference type="GO" id="GO:1901797">
    <property type="term" value="P:negative regulation of signal transduction by p53 class mediator"/>
    <property type="evidence" value="ECO:0000315"/>
    <property type="project" value="UniProtKB"/>
</dbReference>
<dbReference type="GO" id="GO:0080135">
    <property type="term" value="P:regulation of cellular response to stress"/>
    <property type="evidence" value="ECO:0000314"/>
    <property type="project" value="UniProtKB"/>
</dbReference>
<dbReference type="InterPro" id="IPR040308">
    <property type="entry name" value="HAPR1"/>
</dbReference>
<dbReference type="InterPro" id="IPR029196">
    <property type="entry name" value="HAPSTR1-like"/>
</dbReference>
<dbReference type="PANTHER" id="PTHR31624:SF3">
    <property type="entry name" value="HUWE1-ASSOCIATED PROTEIN MODIFYING STRESS RESPONSES 1"/>
    <property type="match status" value="1"/>
</dbReference>
<dbReference type="PANTHER" id="PTHR31624">
    <property type="entry name" value="UPF0472 PROTEIN C16ORF72"/>
    <property type="match status" value="1"/>
</dbReference>
<dbReference type="Pfam" id="PF15251">
    <property type="entry name" value="TAPR1-like"/>
    <property type="match status" value="1"/>
</dbReference>
<reference key="1">
    <citation type="journal article" date="2004" name="Nature">
        <title>The sequence and analysis of duplication-rich human chromosome 16.</title>
        <authorList>
            <person name="Martin J."/>
            <person name="Han C."/>
            <person name="Gordon L.A."/>
            <person name="Terry A."/>
            <person name="Prabhakar S."/>
            <person name="She X."/>
            <person name="Xie G."/>
            <person name="Hellsten U."/>
            <person name="Chan Y.M."/>
            <person name="Altherr M."/>
            <person name="Couronne O."/>
            <person name="Aerts A."/>
            <person name="Bajorek E."/>
            <person name="Black S."/>
            <person name="Blumer H."/>
            <person name="Branscomb E."/>
            <person name="Brown N.C."/>
            <person name="Bruno W.J."/>
            <person name="Buckingham J.M."/>
            <person name="Callen D.F."/>
            <person name="Campbell C.S."/>
            <person name="Campbell M.L."/>
            <person name="Campbell E.W."/>
            <person name="Caoile C."/>
            <person name="Challacombe J.F."/>
            <person name="Chasteen L.A."/>
            <person name="Chertkov O."/>
            <person name="Chi H.C."/>
            <person name="Christensen M."/>
            <person name="Clark L.M."/>
            <person name="Cohn J.D."/>
            <person name="Denys M."/>
            <person name="Detter J.C."/>
            <person name="Dickson M."/>
            <person name="Dimitrijevic-Bussod M."/>
            <person name="Escobar J."/>
            <person name="Fawcett J.J."/>
            <person name="Flowers D."/>
            <person name="Fotopulos D."/>
            <person name="Glavina T."/>
            <person name="Gomez M."/>
            <person name="Gonzales E."/>
            <person name="Goodstein D."/>
            <person name="Goodwin L.A."/>
            <person name="Grady D.L."/>
            <person name="Grigoriev I."/>
            <person name="Groza M."/>
            <person name="Hammon N."/>
            <person name="Hawkins T."/>
            <person name="Haydu L."/>
            <person name="Hildebrand C.E."/>
            <person name="Huang W."/>
            <person name="Israni S."/>
            <person name="Jett J."/>
            <person name="Jewett P.B."/>
            <person name="Kadner K."/>
            <person name="Kimball H."/>
            <person name="Kobayashi A."/>
            <person name="Krawczyk M.-C."/>
            <person name="Leyba T."/>
            <person name="Longmire J.L."/>
            <person name="Lopez F."/>
            <person name="Lou Y."/>
            <person name="Lowry S."/>
            <person name="Ludeman T."/>
            <person name="Manohar C.F."/>
            <person name="Mark G.A."/>
            <person name="McMurray K.L."/>
            <person name="Meincke L.J."/>
            <person name="Morgan J."/>
            <person name="Moyzis R.K."/>
            <person name="Mundt M.O."/>
            <person name="Munk A.C."/>
            <person name="Nandkeshwar R.D."/>
            <person name="Pitluck S."/>
            <person name="Pollard M."/>
            <person name="Predki P."/>
            <person name="Parson-Quintana B."/>
            <person name="Ramirez L."/>
            <person name="Rash S."/>
            <person name="Retterer J."/>
            <person name="Ricke D.O."/>
            <person name="Robinson D.L."/>
            <person name="Rodriguez A."/>
            <person name="Salamov A."/>
            <person name="Saunders E.H."/>
            <person name="Scott D."/>
            <person name="Shough T."/>
            <person name="Stallings R.L."/>
            <person name="Stalvey M."/>
            <person name="Sutherland R.D."/>
            <person name="Tapia R."/>
            <person name="Tesmer J.G."/>
            <person name="Thayer N."/>
            <person name="Thompson L.S."/>
            <person name="Tice H."/>
            <person name="Torney D.C."/>
            <person name="Tran-Gyamfi M."/>
            <person name="Tsai M."/>
            <person name="Ulanovsky L.E."/>
            <person name="Ustaszewska A."/>
            <person name="Vo N."/>
            <person name="White P.S."/>
            <person name="Williams A.L."/>
            <person name="Wills P.L."/>
            <person name="Wu J.-R."/>
            <person name="Wu K."/>
            <person name="Yang J."/>
            <person name="DeJong P."/>
            <person name="Bruce D."/>
            <person name="Doggett N.A."/>
            <person name="Deaven L."/>
            <person name="Schmutz J."/>
            <person name="Grimwood J."/>
            <person name="Richardson P."/>
            <person name="Rokhsar D.S."/>
            <person name="Eichler E.E."/>
            <person name="Gilna P."/>
            <person name="Lucas S.M."/>
            <person name="Myers R.M."/>
            <person name="Rubin E.M."/>
            <person name="Pennacchio L.A."/>
        </authorList>
    </citation>
    <scope>NUCLEOTIDE SEQUENCE [LARGE SCALE GENOMIC DNA]</scope>
</reference>
<reference key="2">
    <citation type="journal article" date="2004" name="Genome Res.">
        <title>The status, quality, and expansion of the NIH full-length cDNA project: the Mammalian Gene Collection (MGC).</title>
        <authorList>
            <consortium name="The MGC Project Team"/>
        </authorList>
    </citation>
    <scope>NUCLEOTIDE SEQUENCE [LARGE SCALE MRNA]</scope>
    <source>
        <tissue>Brain</tissue>
    </source>
</reference>
<reference key="3">
    <citation type="journal article" date="2008" name="Proc. Natl. Acad. Sci. U.S.A.">
        <title>A quantitative atlas of mitotic phosphorylation.</title>
        <authorList>
            <person name="Dephoure N."/>
            <person name="Zhou C."/>
            <person name="Villen J."/>
            <person name="Beausoleil S.A."/>
            <person name="Bakalarski C.E."/>
            <person name="Elledge S.J."/>
            <person name="Gygi S.P."/>
        </authorList>
    </citation>
    <scope>PHOSPHORYLATION [LARGE SCALE ANALYSIS] AT SER-167</scope>
    <scope>IDENTIFICATION BY MASS SPECTROMETRY [LARGE SCALE ANALYSIS]</scope>
    <source>
        <tissue>Cervix carcinoma</tissue>
    </source>
</reference>
<reference key="4">
    <citation type="journal article" date="2013" name="J. Proteome Res.">
        <title>Toward a comprehensive characterization of a human cancer cell phosphoproteome.</title>
        <authorList>
            <person name="Zhou H."/>
            <person name="Di Palma S."/>
            <person name="Preisinger C."/>
            <person name="Peng M."/>
            <person name="Polat A.N."/>
            <person name="Heck A.J."/>
            <person name="Mohammed S."/>
        </authorList>
    </citation>
    <scope>PHOSPHORYLATION [LARGE SCALE ANALYSIS] AT SER-167 AND SER-212</scope>
    <scope>IDENTIFICATION BY MASS SPECTROMETRY [LARGE SCALE ANALYSIS]</scope>
    <source>
        <tissue>Cervix carcinoma</tissue>
        <tissue>Erythroleukemia</tissue>
    </source>
</reference>
<reference key="5">
    <citation type="journal article" date="2021" name="Aging Cell">
        <title>A novel p53 regulator, C16ORF72/TAPR1, buffers against telomerase inhibition.</title>
        <authorList>
            <person name="Benslimane Y."/>
            <person name="Sanchez-Osuna M."/>
            <person name="Coulombe-Huntington J."/>
            <person name="Bertomeu T."/>
            <person name="Henry D."/>
            <person name="Huard C."/>
            <person name="Bonneil E."/>
            <person name="Thibault P."/>
            <person name="Tyers M."/>
            <person name="Harrington L."/>
        </authorList>
    </citation>
    <scope>FUNCTION</scope>
    <scope>INTERACTION WITH HUWE1</scope>
</reference>
<reference key="6">
    <citation type="journal article" date="2022" name="Proc. Natl. Acad. Sci. U.S.A.">
        <title>C16orf72/HAPSTR1 is a molecular rheostat in an integrated network of stress response pathways.</title>
        <authorList>
            <person name="Amici D.R."/>
            <person name="Ansel D.J."/>
            <person name="Metz K.A."/>
            <person name="Smith R.S."/>
            <person name="Phoumyvong C.M."/>
            <person name="Gayatri S."/>
            <person name="Chamera T."/>
            <person name="Edwards S.L."/>
            <person name="O'Hara B.P."/>
            <person name="Srivastava S."/>
            <person name="Brockway S."/>
            <person name="Takagishi S.R."/>
            <person name="Cho B.K."/>
            <person name="Goo Y.A."/>
            <person name="Kelleher N.L."/>
            <person name="Ben-Sahra I."/>
            <person name="Foltz D.R."/>
            <person name="Li J."/>
            <person name="Mendillo M.L."/>
        </authorList>
    </citation>
    <scope>INDUCTION</scope>
    <scope>FUNCTION</scope>
    <scope>INTERACTION WITH HUWE1</scope>
    <scope>SUBCELLULAR LOCATION</scope>
    <scope>MUTAGENESIS OF PHE-90; ALA-94; TYR-101 AND GLY-119</scope>
    <scope>SUBUNIT</scope>
    <scope>ALTERNATIVE SPLICING</scope>
    <scope>UBIQUITINATION BY HUWE1</scope>
    <scope>REGION</scope>
</reference>
<reference key="7">
    <citation type="journal article" date="2023" name="Nat. Commun.">
        <title>The HAPSTR2 retrogene buffers stress signaling and resilience in mammals.</title>
        <authorList>
            <person name="Amici D.R."/>
            <person name="Cingoz H."/>
            <person name="Alasady M.J."/>
            <person name="Alhayek S."/>
            <person name="Phoumyvong C.M."/>
            <person name="Sahni N."/>
            <person name="Yi S.S."/>
            <person name="Mendillo M.L."/>
        </authorList>
    </citation>
    <scope>SUBUNIT</scope>
</reference>
<keyword id="KW-0025">Alternative splicing</keyword>
<keyword id="KW-0963">Cytoplasm</keyword>
<keyword id="KW-0539">Nucleus</keyword>
<keyword id="KW-0597">Phosphoprotein</keyword>
<keyword id="KW-1267">Proteomics identification</keyword>
<keyword id="KW-1185">Reference proteome</keyword>
<keyword id="KW-0346">Stress response</keyword>
<keyword id="KW-0832">Ubl conjugation</keyword>
<comment type="function">
    <text evidence="2 3">Acts as a central player within a network of stress response pathways promoting cellular adaptability. The E3 ligase HUWE1 assists HAPSTR1 in controlling stress signaling and in turn, HUWE1 feeds back to promote the degradation of HAPSTR1. HAPSTR1 represents a central coordination mechanism for stress response programs (PubMed:35776542). Functions as a negative regulator of TP53/P53 in the cellular response to telomere erosion and probably also DNA damage (PubMed:33660365). May attenuate p53/TP53 activation through the E3 ubiquitin ligase HUWE1 (PubMed:33660365).</text>
</comment>
<comment type="subunit">
    <text evidence="3 4">Homooligomer (PubMed:35776542). Heterooligomer with HAPSTR2; the interaction is direct and stabilizes HAPSTR1 (PubMed:36631436). Interacts with HUWE1 (PubMed:35776542).</text>
</comment>
<comment type="interaction">
    <interactant intactId="EBI-10234807">
        <id>Q14CZ0</id>
    </interactant>
    <interactant intactId="EBI-10175124">
        <id>Q8IZU0</id>
        <label>FAM9B</label>
    </interactant>
    <organismsDiffer>false</organismsDiffer>
    <experiments>5</experiments>
</comment>
<comment type="interaction">
    <interactant intactId="EBI-10234807">
        <id>Q14CZ0</id>
    </interactant>
    <interactant intactId="EBI-1049156">
        <id>Q96CB8</id>
        <label>INTS12</label>
    </interactant>
    <organismsDiffer>false</organismsDiffer>
    <experiments>5</experiments>
</comment>
<comment type="subcellular location">
    <subcellularLocation>
        <location evidence="3">Nucleus</location>
    </subcellularLocation>
    <subcellularLocation>
        <location evidence="3">Cytoplasm</location>
    </subcellularLocation>
</comment>
<comment type="alternative products">
    <event type="alternative splicing"/>
    <isoform>
        <id>Q14CZ0-1</id>
        <name>1</name>
        <sequence type="displayed"/>
    </isoform>
    <isoform>
        <id>Q14CZ0-2</id>
        <name>2</name>
        <sequence type="described" ref="VSP_061734"/>
    </isoform>
</comment>
<comment type="induction">
    <text evidence="3">Induced by specific types of stressors like DNA damage, cellular starvation and proteotoxicity.</text>
</comment>
<comment type="PTM">
    <text evidence="3">Ubiquitinated by HUWE1. Promotes HAPSTR1 degradation through polyubiquitination.</text>
</comment>
<comment type="similarity">
    <text evidence="7">Belongs to the HAPSTR1 family.</text>
</comment>
<feature type="chain" id="PRO_0000297627" description="HUWE1-associated protein modifying stress responses 1">
    <location>
        <begin position="1"/>
        <end position="275"/>
    </location>
</feature>
<feature type="region of interest" description="Disordered" evidence="1">
    <location>
        <begin position="32"/>
        <end position="51"/>
    </location>
</feature>
<feature type="region of interest" description="HUWE1-binding and HAPSTR1 oligomerization (HBO) domain" evidence="3">
    <location>
        <begin position="80"/>
        <end position="152"/>
    </location>
</feature>
<feature type="region of interest" description="Disordered" evidence="1">
    <location>
        <begin position="155"/>
        <end position="181"/>
    </location>
</feature>
<feature type="region of interest" description="Disordered" evidence="1">
    <location>
        <begin position="204"/>
        <end position="227"/>
    </location>
</feature>
<feature type="region of interest" description="Disordered" evidence="1">
    <location>
        <begin position="250"/>
        <end position="275"/>
    </location>
</feature>
<feature type="compositionally biased region" description="Acidic residues" evidence="1">
    <location>
        <begin position="32"/>
        <end position="44"/>
    </location>
</feature>
<feature type="compositionally biased region" description="Low complexity" evidence="1">
    <location>
        <begin position="172"/>
        <end position="181"/>
    </location>
</feature>
<feature type="compositionally biased region" description="Polar residues" evidence="1">
    <location>
        <begin position="204"/>
        <end position="216"/>
    </location>
</feature>
<feature type="modified residue" description="Phosphoserine" evidence="10 11">
    <location>
        <position position="167"/>
    </location>
</feature>
<feature type="modified residue" description="Phosphoserine" evidence="11">
    <location>
        <position position="212"/>
    </location>
</feature>
<feature type="splice variant" id="VSP_061734" description="In isoform 2." evidence="6">
    <location>
        <begin position="199"/>
        <end position="275"/>
    </location>
</feature>
<feature type="sequence variant" id="VAR_034657" description="In dbSNP:rs34869458.">
    <original>N</original>
    <variation>S</variation>
    <location>
        <position position="221"/>
    </location>
</feature>
<feature type="mutagenesis site" description="Loss of interaction with HUWE1. No effect on oligomerization. No effect on stabilization by HAPSTR2." evidence="3 4">
    <original>F</original>
    <variation>R</variation>
    <location>
        <position position="90"/>
    </location>
</feature>
<feature type="mutagenesis site" description="Loss of interaction with HUWE1. No effect on oligomerization." evidence="3">
    <original>A</original>
    <variation>R</variation>
    <location>
        <position position="94"/>
    </location>
</feature>
<feature type="mutagenesis site" description="Loss of interaction with HUWE1. No effect on oligomerization." evidence="3">
    <original>Y</original>
    <variation>A</variation>
    <location>
        <position position="101"/>
    </location>
</feature>
<feature type="mutagenesis site" description="Decreased interaction with HUWE1. Loss of oligomerization. Increased proteasomal degradation. Loss of stabilization by HAPSTR2." evidence="3">
    <original>G</original>
    <variation>R</variation>
    <location>
        <position position="119"/>
    </location>
</feature>
<gene>
    <name evidence="9" type="primary">HAPSTR1</name>
    <name evidence="9" type="synonym">C16orf72</name>
    <name evidence="5" type="synonym">TAPR1</name>
</gene>
<proteinExistence type="evidence at protein level"/>
<name>HAPR1_HUMAN</name>
<protein>
    <recommendedName>
        <fullName evidence="8">HUWE1-associated protein modifying stress responses 1</fullName>
    </recommendedName>
    <alternativeName>
        <fullName evidence="5">Telomere attrition and p53 response 1 protein</fullName>
    </alternativeName>
</protein>